<protein>
    <recommendedName>
        <fullName>Pathogenesis-related protein 1A1</fullName>
        <shortName>PR-1A1</shortName>
    </recommendedName>
</protein>
<organism>
    <name type="scientific">Solanum lycopersicum</name>
    <name type="common">Tomato</name>
    <name type="synonym">Lycopersicon esculentum</name>
    <dbReference type="NCBI Taxonomy" id="4081"/>
    <lineage>
        <taxon>Eukaryota</taxon>
        <taxon>Viridiplantae</taxon>
        <taxon>Streptophyta</taxon>
        <taxon>Embryophyta</taxon>
        <taxon>Tracheophyta</taxon>
        <taxon>Spermatophyta</taxon>
        <taxon>Magnoliopsida</taxon>
        <taxon>eudicotyledons</taxon>
        <taxon>Gunneridae</taxon>
        <taxon>Pentapetalae</taxon>
        <taxon>asterids</taxon>
        <taxon>lamiids</taxon>
        <taxon>Solanales</taxon>
        <taxon>Solanaceae</taxon>
        <taxon>Solanoideae</taxon>
        <taxon>Solaneae</taxon>
        <taxon>Solanum</taxon>
        <taxon>Solanum subgen. Lycopersicon</taxon>
    </lineage>
</organism>
<name>PR1A_SOLLC</name>
<comment type="function">
    <text evidence="1">Probably involved in the defense reaction of plants against pathogens.</text>
</comment>
<comment type="induction">
    <text>Synthesized during pathogen infection or other stress-related responses.</text>
</comment>
<comment type="similarity">
    <text evidence="3">Belongs to the CRISP family.</text>
</comment>
<evidence type="ECO:0000250" key="1"/>
<evidence type="ECO:0000255" key="2"/>
<evidence type="ECO:0000305" key="3"/>
<dbReference type="EMBL" id="X71592">
    <property type="protein sequence ID" value="CAA50596.1"/>
    <property type="molecule type" value="mRNA"/>
</dbReference>
<dbReference type="PIR" id="S43894">
    <property type="entry name" value="S43894"/>
</dbReference>
<dbReference type="SMR" id="Q08697"/>
<dbReference type="FunCoup" id="Q08697">
    <property type="interactions" value="450"/>
</dbReference>
<dbReference type="STRING" id="4081.Q08697"/>
<dbReference type="PaxDb" id="4081-Solyc01g106610.2.1"/>
<dbReference type="eggNOG" id="KOG3017">
    <property type="taxonomic scope" value="Eukaryota"/>
</dbReference>
<dbReference type="InParanoid" id="Q08697"/>
<dbReference type="Proteomes" id="UP000004994">
    <property type="component" value="Unplaced"/>
</dbReference>
<dbReference type="ExpressionAtlas" id="Q08697">
    <property type="expression patterns" value="baseline and differential"/>
</dbReference>
<dbReference type="GO" id="GO:0005615">
    <property type="term" value="C:extracellular space"/>
    <property type="evidence" value="ECO:0000318"/>
    <property type="project" value="GO_Central"/>
</dbReference>
<dbReference type="GO" id="GO:0006952">
    <property type="term" value="P:defense response"/>
    <property type="evidence" value="ECO:0007669"/>
    <property type="project" value="UniProtKB-KW"/>
</dbReference>
<dbReference type="GO" id="GO:0019953">
    <property type="term" value="P:sexual reproduction"/>
    <property type="evidence" value="ECO:0000318"/>
    <property type="project" value="GO_Central"/>
</dbReference>
<dbReference type="CDD" id="cd05381">
    <property type="entry name" value="CAP_PR-1"/>
    <property type="match status" value="1"/>
</dbReference>
<dbReference type="FunFam" id="3.40.33.10:FF:000006">
    <property type="entry name" value="Putative pathogenesis-related protein 1"/>
    <property type="match status" value="1"/>
</dbReference>
<dbReference type="Gene3D" id="3.40.33.10">
    <property type="entry name" value="CAP"/>
    <property type="match status" value="1"/>
</dbReference>
<dbReference type="InterPro" id="IPR018244">
    <property type="entry name" value="Allrgn_V5/Tpx1_CS"/>
</dbReference>
<dbReference type="InterPro" id="IPR014044">
    <property type="entry name" value="CAP_dom"/>
</dbReference>
<dbReference type="InterPro" id="IPR035940">
    <property type="entry name" value="CAP_sf"/>
</dbReference>
<dbReference type="InterPro" id="IPR001283">
    <property type="entry name" value="CRISP-related"/>
</dbReference>
<dbReference type="InterPro" id="IPR002413">
    <property type="entry name" value="V5_allergen-like"/>
</dbReference>
<dbReference type="PANTHER" id="PTHR10334">
    <property type="entry name" value="CYSTEINE-RICH SECRETORY PROTEIN-RELATED"/>
    <property type="match status" value="1"/>
</dbReference>
<dbReference type="Pfam" id="PF00188">
    <property type="entry name" value="CAP"/>
    <property type="match status" value="1"/>
</dbReference>
<dbReference type="PRINTS" id="PR00838">
    <property type="entry name" value="V5ALLERGEN"/>
</dbReference>
<dbReference type="PRINTS" id="PR00837">
    <property type="entry name" value="V5TPXLIKE"/>
</dbReference>
<dbReference type="SMART" id="SM00198">
    <property type="entry name" value="SCP"/>
    <property type="match status" value="1"/>
</dbReference>
<dbReference type="SUPFAM" id="SSF55797">
    <property type="entry name" value="PR-1-like"/>
    <property type="match status" value="1"/>
</dbReference>
<dbReference type="PROSITE" id="PS01009">
    <property type="entry name" value="CRISP_1"/>
    <property type="match status" value="1"/>
</dbReference>
<dbReference type="PROSITE" id="PS01010">
    <property type="entry name" value="CRISP_2"/>
    <property type="match status" value="1"/>
</dbReference>
<sequence length="175" mass="19660">MKSSIFVACFITFIIFHSSQAQTPRENFLNAHNAARRRVGVGPMTWDDGLAAYAQNYANQRADDCGMIHSDGPYGENLAAAFPQLNAAGAVKMWDDEKQWYDYNSNTCAPGKVCGHYTQVVWRKSVRLGCARVRCNSGWVFITCNYDPPGNYIDNVYGDLEEQKPDFDSKLELPN</sequence>
<proteinExistence type="evidence at transcript level"/>
<keyword id="KW-1015">Disulfide bond</keyword>
<keyword id="KW-0568">Pathogenesis-related protein</keyword>
<keyword id="KW-0611">Plant defense</keyword>
<keyword id="KW-1185">Reference proteome</keyword>
<keyword id="KW-0732">Signal</keyword>
<feature type="signal peptide" evidence="2">
    <location>
        <begin position="1"/>
        <end position="21"/>
    </location>
</feature>
<feature type="chain" id="PRO_0000006310" description="Pathogenesis-related protein 1A1">
    <location>
        <begin position="22"/>
        <end position="175"/>
    </location>
</feature>
<feature type="domain" description="SCP">
    <location>
        <begin position="29"/>
        <end position="146"/>
    </location>
</feature>
<feature type="disulfide bond" evidence="1">
    <location>
        <begin position="65"/>
        <end position="135"/>
    </location>
</feature>
<feature type="disulfide bond" evidence="1">
    <location>
        <begin position="108"/>
        <end position="114"/>
    </location>
</feature>
<feature type="disulfide bond" evidence="1">
    <location>
        <begin position="130"/>
        <end position="144"/>
    </location>
</feature>
<accession>Q08697</accession>
<reference key="1">
    <citation type="journal article" date="1994" name="Mol. Gen. Genet.">
        <title>A gene encoding a novel isoform of the PR-1 protein family from tomato is induced upon viroid infection.</title>
        <authorList>
            <person name="Tornero P."/>
            <person name="Conejero V."/>
            <person name="Vera P."/>
        </authorList>
    </citation>
    <scope>NUCLEOTIDE SEQUENCE [MRNA]</scope>
    <source>
        <strain>cv. Rutgers</strain>
        <tissue>Leaf</tissue>
    </source>
</reference>